<organism>
    <name type="scientific">Nicotiana tabacum</name>
    <name type="common">Common tobacco</name>
    <dbReference type="NCBI Taxonomy" id="4097"/>
    <lineage>
        <taxon>Eukaryota</taxon>
        <taxon>Viridiplantae</taxon>
        <taxon>Streptophyta</taxon>
        <taxon>Embryophyta</taxon>
        <taxon>Tracheophyta</taxon>
        <taxon>Spermatophyta</taxon>
        <taxon>Magnoliopsida</taxon>
        <taxon>eudicotyledons</taxon>
        <taxon>Gunneridae</taxon>
        <taxon>Pentapetalae</taxon>
        <taxon>asterids</taxon>
        <taxon>lamiids</taxon>
        <taxon>Solanales</taxon>
        <taxon>Solanaceae</taxon>
        <taxon>Nicotianoideae</taxon>
        <taxon>Nicotianeae</taxon>
        <taxon>Nicotiana</taxon>
    </lineage>
</organism>
<comment type="subcellular location">
    <subcellularLocation>
        <location evidence="1">Secreted</location>
        <location evidence="1">Cell wall</location>
    </subcellularLocation>
</comment>
<reference evidence="3" key="1">
    <citation type="journal article" date="2001" name="Planta">
        <title>Proteomic analysis reveals a novel set of cell wall proteins in a transformed tobacco cell culture that synthesises secondary walls as determined by biochemical and morphological parameters.</title>
        <authorList>
            <person name="Blee K.A."/>
            <person name="Wheatley E.R."/>
            <person name="Bonham V.A."/>
            <person name="Mitchell G.P."/>
            <person name="Robertson D."/>
            <person name="Slabas A.R."/>
            <person name="Burrell M.M."/>
            <person name="Wojtaszek P."/>
            <person name="Bolwell G.P."/>
        </authorList>
    </citation>
    <scope>PROTEIN SEQUENCE</scope>
    <scope>SUBCELLULAR LOCATION</scope>
    <source>
        <strain evidence="1">cv. Petit Havana</strain>
    </source>
</reference>
<keyword id="KW-0134">Cell wall</keyword>
<keyword id="KW-0903">Direct protein sequencing</keyword>
<keyword id="KW-1185">Reference proteome</keyword>
<keyword id="KW-0964">Secreted</keyword>
<protein>
    <recommendedName>
        <fullName>65 kDa cell wall protein</fullName>
    </recommendedName>
</protein>
<name>CWP28_TOBAC</name>
<accession>P82436</accession>
<sequence length="11" mass="1069">MPPPGSKSXGT</sequence>
<dbReference type="PaxDb" id="4097-P82436"/>
<dbReference type="Proteomes" id="UP000084051">
    <property type="component" value="Unplaced"/>
</dbReference>
<dbReference type="GO" id="GO:0005576">
    <property type="term" value="C:extracellular region"/>
    <property type="evidence" value="ECO:0007669"/>
    <property type="project" value="UniProtKB-KW"/>
</dbReference>
<proteinExistence type="evidence at protein level"/>
<feature type="chain" id="PRO_0000079713" description="65 kDa cell wall protein">
    <location>
        <begin position="1"/>
        <end position="11" status="greater than"/>
    </location>
</feature>
<feature type="non-terminal residue" evidence="2">
    <location>
        <position position="11"/>
    </location>
</feature>
<evidence type="ECO:0000269" key="1">
    <source>
    </source>
</evidence>
<evidence type="ECO:0000303" key="2">
    <source>
    </source>
</evidence>
<evidence type="ECO:0000305" key="3"/>